<feature type="chain" id="PRO_0000297727" description="Histone H2A.Z">
    <location>
        <begin position="1"/>
        <end position="139"/>
    </location>
</feature>
<feature type="region of interest" description="Disordered" evidence="2">
    <location>
        <begin position="1"/>
        <end position="28"/>
    </location>
</feature>
<feature type="compositionally biased region" description="Gly residues" evidence="2">
    <location>
        <begin position="1"/>
        <end position="13"/>
    </location>
</feature>
<feature type="modified residue" description="N6-acetyllysine" evidence="1">
    <location>
        <position position="5"/>
    </location>
</feature>
<feature type="modified residue" description="N6-acetyllysine" evidence="1">
    <location>
        <position position="11"/>
    </location>
</feature>
<accession>Q0UG93</accession>
<proteinExistence type="inferred from homology"/>
<comment type="function">
    <text evidence="1">Variant histone H2A which can replace H2A in some nucleosomes. Nucleosomes wrap and compact DNA into chromatin, limiting DNA accessibility to the cellular machineries which require DNA as a template. Histones thereby play a central role in transcription regulation, DNA repair, DNA replication and chromosomal stability. DNA accessibility is regulated via a complex set of post-translational modifications of histones, also called histone code, and nucleosome remodeling. This variant is enriched at promoters, it may keep them in a repressed state until the appropriate activation signal is received. Near telomeres, it may counteract gene silencing caused by the spread of heterochromatin proteins. Required for the RNA polymerase II and SPT15/TBP recruitment to the target genes. Involved in chromosome stability (By similarity).</text>
</comment>
<comment type="subunit">
    <text evidence="1">The nucleosome is a histone octamer containing two molecules each of H2A, H2B, H3 and H4 assembled in one H3-H4 heterotetramer and two H2A-H2B heterodimers. The octamer wraps approximately 147 bp of DNA. H2A or its variant H2A.Z forms a heterodimer with H2B. H2A.Z associates with the VPS72/SWC2 subunit of the SWR1 chromatin remodeling complex. Also interacts with RBP1/DNA-directed RNA polymerase II largest subunit (By similarity).</text>
</comment>
<comment type="subcellular location">
    <subcellularLocation>
        <location evidence="1">Nucleus</location>
    </subcellularLocation>
    <subcellularLocation>
        <location evidence="1">Chromosome</location>
    </subcellularLocation>
</comment>
<comment type="PTM">
    <text evidence="1">Acetylated once deposited into chromatin.</text>
</comment>
<comment type="similarity">
    <text evidence="3">Belongs to the histone H2A family.</text>
</comment>
<comment type="sequence caution" evidence="3">
    <conflict type="erroneous gene model prediction">
        <sequence resource="EMBL-CDS" id="EAT83413"/>
    </conflict>
</comment>
<keyword id="KW-0007">Acetylation</keyword>
<keyword id="KW-0158">Chromosome</keyword>
<keyword id="KW-0238">DNA-binding</keyword>
<keyword id="KW-0544">Nucleosome core</keyword>
<keyword id="KW-0539">Nucleus</keyword>
<reference key="1">
    <citation type="journal article" date="2007" name="Plant Cell">
        <title>Dothideomycete-plant interactions illuminated by genome sequencing and EST analysis of the wheat pathogen Stagonospora nodorum.</title>
        <authorList>
            <person name="Hane J.K."/>
            <person name="Lowe R.G.T."/>
            <person name="Solomon P.S."/>
            <person name="Tan K.-C."/>
            <person name="Schoch C.L."/>
            <person name="Spatafora J.W."/>
            <person name="Crous P.W."/>
            <person name="Kodira C.D."/>
            <person name="Birren B.W."/>
            <person name="Galagan J.E."/>
            <person name="Torriani S.F.F."/>
            <person name="McDonald B.A."/>
            <person name="Oliver R.P."/>
        </authorList>
    </citation>
    <scope>NUCLEOTIDE SEQUENCE [LARGE SCALE GENOMIC DNA]</scope>
    <source>
        <strain>SN15 / ATCC MYA-4574 / FGSC 10173</strain>
    </source>
</reference>
<dbReference type="EMBL" id="CH445338">
    <property type="protein sequence ID" value="EAT83413.2"/>
    <property type="status" value="ALT_SEQ"/>
    <property type="molecule type" value="Genomic_DNA"/>
</dbReference>
<dbReference type="RefSeq" id="XP_001799520.1">
    <property type="nucleotide sequence ID" value="XM_001799468.1"/>
</dbReference>
<dbReference type="SMR" id="Q0UG93"/>
<dbReference type="FunCoup" id="Q0UG93">
    <property type="interactions" value="963"/>
</dbReference>
<dbReference type="STRING" id="321614.Q0UG93"/>
<dbReference type="GeneID" id="5976421"/>
<dbReference type="KEGG" id="pno:SNOG_09221"/>
<dbReference type="VEuPathDB" id="FungiDB:JI435_092210"/>
<dbReference type="eggNOG" id="KOG1757">
    <property type="taxonomic scope" value="Eukaryota"/>
</dbReference>
<dbReference type="InParanoid" id="Q0UG93"/>
<dbReference type="OMA" id="MNKKGAP"/>
<dbReference type="OrthoDB" id="9421954at2759"/>
<dbReference type="Proteomes" id="UP000001055">
    <property type="component" value="Unassembled WGS sequence"/>
</dbReference>
<dbReference type="GO" id="GO:0000786">
    <property type="term" value="C:nucleosome"/>
    <property type="evidence" value="ECO:0000318"/>
    <property type="project" value="GO_Central"/>
</dbReference>
<dbReference type="GO" id="GO:0005634">
    <property type="term" value="C:nucleus"/>
    <property type="evidence" value="ECO:0000318"/>
    <property type="project" value="GO_Central"/>
</dbReference>
<dbReference type="GO" id="GO:0003677">
    <property type="term" value="F:DNA binding"/>
    <property type="evidence" value="ECO:0007669"/>
    <property type="project" value="UniProtKB-KW"/>
</dbReference>
<dbReference type="GO" id="GO:0046982">
    <property type="term" value="F:protein heterodimerization activity"/>
    <property type="evidence" value="ECO:0007669"/>
    <property type="project" value="InterPro"/>
</dbReference>
<dbReference type="GO" id="GO:0030527">
    <property type="term" value="F:structural constituent of chromatin"/>
    <property type="evidence" value="ECO:0000318"/>
    <property type="project" value="GO_Central"/>
</dbReference>
<dbReference type="GO" id="GO:0031507">
    <property type="term" value="P:heterochromatin formation"/>
    <property type="evidence" value="ECO:0000318"/>
    <property type="project" value="GO_Central"/>
</dbReference>
<dbReference type="CDD" id="cd00074">
    <property type="entry name" value="HFD_H2A"/>
    <property type="match status" value="1"/>
</dbReference>
<dbReference type="FunFam" id="1.10.20.10:FF:000021">
    <property type="entry name" value="Histone H2A"/>
    <property type="match status" value="1"/>
</dbReference>
<dbReference type="Gene3D" id="1.10.20.10">
    <property type="entry name" value="Histone, subunit A"/>
    <property type="match status" value="1"/>
</dbReference>
<dbReference type="InterPro" id="IPR009072">
    <property type="entry name" value="Histone-fold"/>
</dbReference>
<dbReference type="InterPro" id="IPR002119">
    <property type="entry name" value="Histone_H2A"/>
</dbReference>
<dbReference type="InterPro" id="IPR007125">
    <property type="entry name" value="Histone_H2A/H2B/H3"/>
</dbReference>
<dbReference type="InterPro" id="IPR032454">
    <property type="entry name" value="Histone_H2A_C"/>
</dbReference>
<dbReference type="PANTHER" id="PTHR23430">
    <property type="entry name" value="HISTONE H2A"/>
    <property type="match status" value="1"/>
</dbReference>
<dbReference type="Pfam" id="PF00125">
    <property type="entry name" value="Histone"/>
    <property type="match status" value="1"/>
</dbReference>
<dbReference type="Pfam" id="PF16211">
    <property type="entry name" value="Histone_H2A_C"/>
    <property type="match status" value="1"/>
</dbReference>
<dbReference type="PRINTS" id="PR00620">
    <property type="entry name" value="HISTONEH2A"/>
</dbReference>
<dbReference type="SMART" id="SM00414">
    <property type="entry name" value="H2A"/>
    <property type="match status" value="1"/>
</dbReference>
<dbReference type="SUPFAM" id="SSF47113">
    <property type="entry name" value="Histone-fold"/>
    <property type="match status" value="1"/>
</dbReference>
<name>H2AZ_PHANO</name>
<sequence>MAGGKGKTGGKTGGKGDSHVKTTKSHSAKAGLQFPCGRIKRHLRTITRQKTRIGAKASIYLTAVLEYLTAEVLELAGNAAKDLKVKRITPRHLQLAIRGDEELDTLIRATIAFGGVLPHINRALLLKVEQKKKGAKVEA</sequence>
<gene>
    <name type="primary">HTZ1</name>
    <name type="ORF">SNOG_09221</name>
</gene>
<organism>
    <name type="scientific">Phaeosphaeria nodorum (strain SN15 / ATCC MYA-4574 / FGSC 10173)</name>
    <name type="common">Glume blotch fungus</name>
    <name type="synonym">Parastagonospora nodorum</name>
    <dbReference type="NCBI Taxonomy" id="321614"/>
    <lineage>
        <taxon>Eukaryota</taxon>
        <taxon>Fungi</taxon>
        <taxon>Dikarya</taxon>
        <taxon>Ascomycota</taxon>
        <taxon>Pezizomycotina</taxon>
        <taxon>Dothideomycetes</taxon>
        <taxon>Pleosporomycetidae</taxon>
        <taxon>Pleosporales</taxon>
        <taxon>Pleosporineae</taxon>
        <taxon>Phaeosphaeriaceae</taxon>
        <taxon>Parastagonospora</taxon>
    </lineage>
</organism>
<evidence type="ECO:0000250" key="1"/>
<evidence type="ECO:0000256" key="2">
    <source>
        <dbReference type="SAM" id="MobiDB-lite"/>
    </source>
</evidence>
<evidence type="ECO:0000305" key="3"/>
<protein>
    <recommendedName>
        <fullName>Histone H2A.Z</fullName>
    </recommendedName>
</protein>